<evidence type="ECO:0000255" key="1">
    <source>
        <dbReference type="HAMAP-Rule" id="MF_00087"/>
    </source>
</evidence>
<organism>
    <name type="scientific">Rippkaea orientalis (strain PCC 8801 / RF-1)</name>
    <name type="common">Cyanothece sp. (strain PCC 8801)</name>
    <dbReference type="NCBI Taxonomy" id="41431"/>
    <lineage>
        <taxon>Bacteria</taxon>
        <taxon>Bacillati</taxon>
        <taxon>Cyanobacteriota</taxon>
        <taxon>Cyanophyceae</taxon>
        <taxon>Oscillatoriophycideae</taxon>
        <taxon>Chroococcales</taxon>
        <taxon>Aphanothecaceae</taxon>
        <taxon>Rippkaea</taxon>
        <taxon>Rippkaea orientalis</taxon>
    </lineage>
</organism>
<gene>
    <name evidence="1" type="primary">hemA</name>
    <name type="ordered locus">PCC8801_3645</name>
</gene>
<keyword id="KW-0149">Chlorophyll biosynthesis</keyword>
<keyword id="KW-0521">NADP</keyword>
<keyword id="KW-0560">Oxidoreductase</keyword>
<keyword id="KW-0627">Porphyrin biosynthesis</keyword>
<keyword id="KW-1185">Reference proteome</keyword>
<reference key="1">
    <citation type="journal article" date="2011" name="MBio">
        <title>Novel metabolic attributes of the genus Cyanothece, comprising a group of unicellular nitrogen-fixing Cyanobacteria.</title>
        <authorList>
            <person name="Bandyopadhyay A."/>
            <person name="Elvitigala T."/>
            <person name="Welsh E."/>
            <person name="Stockel J."/>
            <person name="Liberton M."/>
            <person name="Min H."/>
            <person name="Sherman L.A."/>
            <person name="Pakrasi H.B."/>
        </authorList>
    </citation>
    <scope>NUCLEOTIDE SEQUENCE [LARGE SCALE GENOMIC DNA]</scope>
    <source>
        <strain>PCC 8801 / RF-1</strain>
    </source>
</reference>
<comment type="function">
    <text evidence="1">Catalyzes the NADPH-dependent reduction of glutamyl-tRNA(Glu) to glutamate 1-semialdehyde (GSA).</text>
</comment>
<comment type="catalytic activity">
    <reaction evidence="1">
        <text>(S)-4-amino-5-oxopentanoate + tRNA(Glu) + NADP(+) = L-glutamyl-tRNA(Glu) + NADPH + H(+)</text>
        <dbReference type="Rhea" id="RHEA:12344"/>
        <dbReference type="Rhea" id="RHEA-COMP:9663"/>
        <dbReference type="Rhea" id="RHEA-COMP:9680"/>
        <dbReference type="ChEBI" id="CHEBI:15378"/>
        <dbReference type="ChEBI" id="CHEBI:57501"/>
        <dbReference type="ChEBI" id="CHEBI:57783"/>
        <dbReference type="ChEBI" id="CHEBI:58349"/>
        <dbReference type="ChEBI" id="CHEBI:78442"/>
        <dbReference type="ChEBI" id="CHEBI:78520"/>
        <dbReference type="EC" id="1.2.1.70"/>
    </reaction>
</comment>
<comment type="pathway">
    <text evidence="1">Porphyrin-containing compound metabolism; protoporphyrin-IX biosynthesis; 5-aminolevulinate from L-glutamyl-tRNA(Glu): step 1/2.</text>
</comment>
<comment type="pathway">
    <text evidence="1">Porphyrin-containing compound metabolism; chlorophyll biosynthesis.</text>
</comment>
<comment type="subunit">
    <text evidence="1">Homodimer.</text>
</comment>
<comment type="domain">
    <text evidence="1">Possesses an unusual extended V-shaped dimeric structure with each monomer consisting of three distinct domains arranged along a curved 'spinal' alpha-helix. The N-terminal catalytic domain specifically recognizes the glutamate moiety of the substrate. The second domain is the NADPH-binding domain, and the third C-terminal domain is responsible for dimerization.</text>
</comment>
<comment type="miscellaneous">
    <text evidence="1">During catalysis, the active site Cys acts as a nucleophile attacking the alpha-carbonyl group of tRNA-bound glutamate with the formation of a thioester intermediate between enzyme and glutamate, and the concomitant release of tRNA(Glu). The thioester intermediate is finally reduced by direct hydride transfer from NADPH, to form the product GSA.</text>
</comment>
<comment type="similarity">
    <text evidence="1">Belongs to the glutamyl-tRNA reductase family.</text>
</comment>
<accession>B7K1R5</accession>
<dbReference type="EC" id="1.2.1.70" evidence="1"/>
<dbReference type="EMBL" id="CP001287">
    <property type="protein sequence ID" value="ACK67607.1"/>
    <property type="molecule type" value="Genomic_DNA"/>
</dbReference>
<dbReference type="RefSeq" id="WP_012596865.1">
    <property type="nucleotide sequence ID" value="NC_011726.1"/>
</dbReference>
<dbReference type="SMR" id="B7K1R5"/>
<dbReference type="STRING" id="41431.PCC8801_3645"/>
<dbReference type="KEGG" id="cyp:PCC8801_3645"/>
<dbReference type="eggNOG" id="COG0373">
    <property type="taxonomic scope" value="Bacteria"/>
</dbReference>
<dbReference type="HOGENOM" id="CLU_035113_2_1_3"/>
<dbReference type="OrthoDB" id="110209at2"/>
<dbReference type="UniPathway" id="UPA00251">
    <property type="reaction ID" value="UER00316"/>
</dbReference>
<dbReference type="UniPathway" id="UPA00668"/>
<dbReference type="Proteomes" id="UP000008204">
    <property type="component" value="Chromosome"/>
</dbReference>
<dbReference type="GO" id="GO:0008883">
    <property type="term" value="F:glutamyl-tRNA reductase activity"/>
    <property type="evidence" value="ECO:0007669"/>
    <property type="project" value="UniProtKB-UniRule"/>
</dbReference>
<dbReference type="GO" id="GO:0050661">
    <property type="term" value="F:NADP binding"/>
    <property type="evidence" value="ECO:0007669"/>
    <property type="project" value="InterPro"/>
</dbReference>
<dbReference type="GO" id="GO:0015995">
    <property type="term" value="P:chlorophyll biosynthetic process"/>
    <property type="evidence" value="ECO:0007669"/>
    <property type="project" value="UniProtKB-UniRule"/>
</dbReference>
<dbReference type="GO" id="GO:0006782">
    <property type="term" value="P:protoporphyrinogen IX biosynthetic process"/>
    <property type="evidence" value="ECO:0007669"/>
    <property type="project" value="UniProtKB-UniRule"/>
</dbReference>
<dbReference type="CDD" id="cd05213">
    <property type="entry name" value="NAD_bind_Glutamyl_tRNA_reduct"/>
    <property type="match status" value="1"/>
</dbReference>
<dbReference type="FunFam" id="3.30.460.30:FF:000001">
    <property type="entry name" value="Glutamyl-tRNA reductase"/>
    <property type="match status" value="1"/>
</dbReference>
<dbReference type="FunFam" id="3.40.50.720:FF:000031">
    <property type="entry name" value="Glutamyl-tRNA reductase"/>
    <property type="match status" value="1"/>
</dbReference>
<dbReference type="Gene3D" id="3.30.460.30">
    <property type="entry name" value="Glutamyl-tRNA reductase, N-terminal domain"/>
    <property type="match status" value="1"/>
</dbReference>
<dbReference type="Gene3D" id="3.40.50.720">
    <property type="entry name" value="NAD(P)-binding Rossmann-like Domain"/>
    <property type="match status" value="1"/>
</dbReference>
<dbReference type="HAMAP" id="MF_00087">
    <property type="entry name" value="Glu_tRNA_reductase"/>
    <property type="match status" value="1"/>
</dbReference>
<dbReference type="InterPro" id="IPR000343">
    <property type="entry name" value="4pyrrol_synth_GluRdtase"/>
</dbReference>
<dbReference type="InterPro" id="IPR015896">
    <property type="entry name" value="4pyrrol_synth_GluRdtase_dimer"/>
</dbReference>
<dbReference type="InterPro" id="IPR015895">
    <property type="entry name" value="4pyrrol_synth_GluRdtase_N"/>
</dbReference>
<dbReference type="InterPro" id="IPR018214">
    <property type="entry name" value="GluRdtase_CS"/>
</dbReference>
<dbReference type="InterPro" id="IPR036453">
    <property type="entry name" value="GluRdtase_dimer_dom_sf"/>
</dbReference>
<dbReference type="InterPro" id="IPR036343">
    <property type="entry name" value="GluRdtase_N_sf"/>
</dbReference>
<dbReference type="InterPro" id="IPR036291">
    <property type="entry name" value="NAD(P)-bd_dom_sf"/>
</dbReference>
<dbReference type="InterPro" id="IPR006151">
    <property type="entry name" value="Shikm_DH/Glu-tRNA_Rdtase"/>
</dbReference>
<dbReference type="NCBIfam" id="TIGR01035">
    <property type="entry name" value="hemA"/>
    <property type="match status" value="1"/>
</dbReference>
<dbReference type="NCBIfam" id="NF000744">
    <property type="entry name" value="PRK00045.1-3"/>
    <property type="match status" value="1"/>
</dbReference>
<dbReference type="PANTHER" id="PTHR43120">
    <property type="entry name" value="GLUTAMYL-TRNA REDUCTASE 1, CHLOROPLASTIC"/>
    <property type="match status" value="1"/>
</dbReference>
<dbReference type="PANTHER" id="PTHR43120:SF1">
    <property type="entry name" value="GLUTAMYL-TRNA REDUCTASE 1, CHLOROPLASTIC"/>
    <property type="match status" value="1"/>
</dbReference>
<dbReference type="Pfam" id="PF00745">
    <property type="entry name" value="GlutR_dimer"/>
    <property type="match status" value="1"/>
</dbReference>
<dbReference type="Pfam" id="PF05201">
    <property type="entry name" value="GlutR_N"/>
    <property type="match status" value="1"/>
</dbReference>
<dbReference type="Pfam" id="PF01488">
    <property type="entry name" value="Shikimate_DH"/>
    <property type="match status" value="1"/>
</dbReference>
<dbReference type="PIRSF" id="PIRSF000445">
    <property type="entry name" value="4pyrrol_synth_GluRdtase"/>
    <property type="match status" value="1"/>
</dbReference>
<dbReference type="SUPFAM" id="SSF69742">
    <property type="entry name" value="Glutamyl tRNA-reductase catalytic, N-terminal domain"/>
    <property type="match status" value="1"/>
</dbReference>
<dbReference type="SUPFAM" id="SSF69075">
    <property type="entry name" value="Glutamyl tRNA-reductase dimerization domain"/>
    <property type="match status" value="1"/>
</dbReference>
<dbReference type="SUPFAM" id="SSF51735">
    <property type="entry name" value="NAD(P)-binding Rossmann-fold domains"/>
    <property type="match status" value="1"/>
</dbReference>
<dbReference type="PROSITE" id="PS00747">
    <property type="entry name" value="GLUTR"/>
    <property type="match status" value="1"/>
</dbReference>
<sequence length="428" mass="47813">MNIAVVGLSHKTAPVEVREKLSIQEAKLEEALTHLRGYPHIEEVAIISTCNRLEIYAVVSDTEKGVVEITQFLSETGHLPLNYLRRYLFTLLHQDAVRHLLRVAAGLESLVLGEGQILAQVKTTHKLGQKYKGIGRLLDRLFKQAITAGKRVRSETNIGTGAVSISSAAVELAQTKAEDLANRRISIIGAGKMARLLVQHLLSKGATDITIVNRSHHRAQELAAQFPQASLNLQLLPEMMQVVASSHIVFTSTAATEPILHRENLTAALDPNHALMLFDISVPRNVASDVHGMEGIESYNVDDLKAVVAQNYESRRQMAQEAEGLLEEEVEAFDLWWRSLETVPTISCLRTKVETIREQELEKALSRLGTEFAEKHQEVIEALTRGIVNKILHEPMVQLRAQQDIEARKRCLESLKMLFDLEIEEQFG</sequence>
<name>HEM1_RIPO1</name>
<protein>
    <recommendedName>
        <fullName evidence="1">Glutamyl-tRNA reductase</fullName>
        <shortName evidence="1">GluTR</shortName>
        <ecNumber evidence="1">1.2.1.70</ecNumber>
    </recommendedName>
</protein>
<proteinExistence type="inferred from homology"/>
<feature type="chain" id="PRO_1000190517" description="Glutamyl-tRNA reductase">
    <location>
        <begin position="1"/>
        <end position="428"/>
    </location>
</feature>
<feature type="active site" description="Nucleophile" evidence="1">
    <location>
        <position position="50"/>
    </location>
</feature>
<feature type="binding site" evidence="1">
    <location>
        <begin position="49"/>
        <end position="52"/>
    </location>
    <ligand>
        <name>substrate</name>
    </ligand>
</feature>
<feature type="binding site" evidence="1">
    <location>
        <position position="109"/>
    </location>
    <ligand>
        <name>substrate</name>
    </ligand>
</feature>
<feature type="binding site" evidence="1">
    <location>
        <begin position="114"/>
        <end position="116"/>
    </location>
    <ligand>
        <name>substrate</name>
    </ligand>
</feature>
<feature type="binding site" evidence="1">
    <location>
        <position position="120"/>
    </location>
    <ligand>
        <name>substrate</name>
    </ligand>
</feature>
<feature type="binding site" evidence="1">
    <location>
        <begin position="189"/>
        <end position="194"/>
    </location>
    <ligand>
        <name>NADP(+)</name>
        <dbReference type="ChEBI" id="CHEBI:58349"/>
    </ligand>
</feature>
<feature type="site" description="Important for activity" evidence="1">
    <location>
        <position position="99"/>
    </location>
</feature>